<proteinExistence type="inferred from homology"/>
<reference key="1">
    <citation type="submission" date="2003-02" db="EMBL/GenBank/DDBJ databases">
        <title>Sequencing of the coding region of Vaccinia-WR to an average 9-fold redundancy and an error rate of 0.16/10kb.</title>
        <authorList>
            <person name="Esposito J.J."/>
            <person name="Frace A.M."/>
            <person name="Sammons S.A."/>
            <person name="Olsen-Rasmussen M."/>
            <person name="Osborne J."/>
            <person name="Wohlhueter R."/>
        </authorList>
    </citation>
    <scope>NUCLEOTIDE SEQUENCE [LARGE SCALE GENOMIC DNA]</scope>
</reference>
<evidence type="ECO:0000305" key="1"/>
<feature type="chain" id="PRO_0000412174" description="Uncharacterized protein A30.5">
    <location>
        <begin position="1"/>
        <end position="39"/>
    </location>
</feature>
<accession>P0CK19</accession>
<protein>
    <recommendedName>
        <fullName>Uncharacterized protein A30.5</fullName>
    </recommendedName>
</protein>
<comment type="similarity">
    <text evidence="1">Belongs to the orthopoxvirus A30.5 protein family.</text>
</comment>
<gene>
    <name type="ordered locus">VACWR153.5</name>
    <name type="ORF">A30.5L</name>
</gene>
<organismHost>
    <name type="scientific">Bos taurus</name>
    <name type="common">Bovine</name>
    <dbReference type="NCBI Taxonomy" id="9913"/>
</organismHost>
<sequence>MSAVDFLERLIKAGVYIYVLRTKCVIAALLVKNYSIKDE</sequence>
<organism>
    <name type="scientific">Vaccinia virus (strain Western Reserve)</name>
    <name type="common">VACV</name>
    <name type="synonym">Vaccinia virus (strain WR)</name>
    <dbReference type="NCBI Taxonomy" id="10254"/>
    <lineage>
        <taxon>Viruses</taxon>
        <taxon>Varidnaviria</taxon>
        <taxon>Bamfordvirae</taxon>
        <taxon>Nucleocytoviricota</taxon>
        <taxon>Pokkesviricetes</taxon>
        <taxon>Chitovirales</taxon>
        <taxon>Poxviridae</taxon>
        <taxon>Chordopoxvirinae</taxon>
        <taxon>Orthopoxvirus</taxon>
        <taxon>Vaccinia virus</taxon>
    </lineage>
</organism>
<dbReference type="EMBL" id="AY243312">
    <property type="status" value="NOT_ANNOTATED_CDS"/>
    <property type="molecule type" value="Genomic_DNA"/>
</dbReference>
<dbReference type="Proteomes" id="UP000000344">
    <property type="component" value="Genome"/>
</dbReference>
<name>A305_VACCW</name>
<keyword id="KW-1185">Reference proteome</keyword>